<organism>
    <name type="scientific">Pseudoalteromonas translucida (strain TAC 125)</name>
    <dbReference type="NCBI Taxonomy" id="326442"/>
    <lineage>
        <taxon>Bacteria</taxon>
        <taxon>Pseudomonadati</taxon>
        <taxon>Pseudomonadota</taxon>
        <taxon>Gammaproteobacteria</taxon>
        <taxon>Alteromonadales</taxon>
        <taxon>Pseudoalteromonadaceae</taxon>
        <taxon>Pseudoalteromonas</taxon>
    </lineage>
</organism>
<comment type="function">
    <text evidence="1">Converts 2C-methyl-D-erythritol 2,4-cyclodiphosphate (ME-2,4cPP) into 1-hydroxy-2-methyl-2-(E)-butenyl 4-diphosphate.</text>
</comment>
<comment type="catalytic activity">
    <reaction evidence="1">
        <text>(2E)-4-hydroxy-3-methylbut-2-enyl diphosphate + oxidized [flavodoxin] + H2O + 2 H(+) = 2-C-methyl-D-erythritol 2,4-cyclic diphosphate + reduced [flavodoxin]</text>
        <dbReference type="Rhea" id="RHEA:43604"/>
        <dbReference type="Rhea" id="RHEA-COMP:10622"/>
        <dbReference type="Rhea" id="RHEA-COMP:10623"/>
        <dbReference type="ChEBI" id="CHEBI:15377"/>
        <dbReference type="ChEBI" id="CHEBI:15378"/>
        <dbReference type="ChEBI" id="CHEBI:57618"/>
        <dbReference type="ChEBI" id="CHEBI:58210"/>
        <dbReference type="ChEBI" id="CHEBI:58483"/>
        <dbReference type="ChEBI" id="CHEBI:128753"/>
        <dbReference type="EC" id="1.17.7.3"/>
    </reaction>
</comment>
<comment type="cofactor">
    <cofactor evidence="1">
        <name>[4Fe-4S] cluster</name>
        <dbReference type="ChEBI" id="CHEBI:49883"/>
    </cofactor>
    <text evidence="1">Binds 1 [4Fe-4S] cluster.</text>
</comment>
<comment type="pathway">
    <text evidence="1">Isoprenoid biosynthesis; isopentenyl diphosphate biosynthesis via DXP pathway; isopentenyl diphosphate from 1-deoxy-D-xylulose 5-phosphate: step 5/6.</text>
</comment>
<comment type="similarity">
    <text evidence="1">Belongs to the IspG family.</text>
</comment>
<evidence type="ECO:0000255" key="1">
    <source>
        <dbReference type="HAMAP-Rule" id="MF_00159"/>
    </source>
</evidence>
<feature type="chain" id="PRO_1000011500" description="4-hydroxy-3-methylbut-2-en-1-yl diphosphate synthase (flavodoxin)">
    <location>
        <begin position="1"/>
        <end position="372"/>
    </location>
</feature>
<feature type="binding site" evidence="1">
    <location>
        <position position="270"/>
    </location>
    <ligand>
        <name>[4Fe-4S] cluster</name>
        <dbReference type="ChEBI" id="CHEBI:49883"/>
    </ligand>
</feature>
<feature type="binding site" evidence="1">
    <location>
        <position position="273"/>
    </location>
    <ligand>
        <name>[4Fe-4S] cluster</name>
        <dbReference type="ChEBI" id="CHEBI:49883"/>
    </ligand>
</feature>
<feature type="binding site" evidence="1">
    <location>
        <position position="305"/>
    </location>
    <ligand>
        <name>[4Fe-4S] cluster</name>
        <dbReference type="ChEBI" id="CHEBI:49883"/>
    </ligand>
</feature>
<feature type="binding site" evidence="1">
    <location>
        <position position="312"/>
    </location>
    <ligand>
        <name>[4Fe-4S] cluster</name>
        <dbReference type="ChEBI" id="CHEBI:49883"/>
    </ligand>
</feature>
<name>ISPG_PSET1</name>
<accession>Q3ICZ5</accession>
<sequence length="372" mass="40385">MFSESPIKRRKSTRINVGNVPIGDGAPIAVQSMTNTDTMDVGATVAQIQAIQDAGADIVRVSVPTMDAAEAFKSIKEQVTIPLVADIHFDYRIALKVAKYGVDCLRINPGNIGSEERIRAVVDAAREHNIPIRIGVNGGSLERDLQEKYGEPSPEALLESAMRHVNILRRLDFDQFKISVKASDVFLAVGAYRLLAKEIDQPLHLGITEAGGMRSGSVKSAVGLGMLLAEGIGDTLRVSLAADPVQEIKVGFDILKSLRIRSRGINFIACPSCSRQEFDVVSTMNQLEERLEDIIEPVSVSVIGCVVNGPGEALVSDIGLAGASRRSGLYINGERQKARIDNNNIVEQLEGYVRDFIAKKQNQTPIDIKIVE</sequence>
<dbReference type="EC" id="1.17.7.3" evidence="1"/>
<dbReference type="EMBL" id="CR954247">
    <property type="protein sequence ID" value="CAI89185.1"/>
    <property type="molecule type" value="Genomic_DNA"/>
</dbReference>
<dbReference type="SMR" id="Q3ICZ5"/>
<dbReference type="STRING" id="326442.PSHAb0138"/>
<dbReference type="KEGG" id="pha:PSHAb0138"/>
<dbReference type="PATRIC" id="fig|326442.8.peg.3051"/>
<dbReference type="eggNOG" id="COG0821">
    <property type="taxonomic scope" value="Bacteria"/>
</dbReference>
<dbReference type="HOGENOM" id="CLU_042258_0_0_6"/>
<dbReference type="BioCyc" id="PHAL326442:PSHA_RS15530-MONOMER"/>
<dbReference type="UniPathway" id="UPA00056">
    <property type="reaction ID" value="UER00096"/>
</dbReference>
<dbReference type="Proteomes" id="UP000006843">
    <property type="component" value="Chromosome II"/>
</dbReference>
<dbReference type="GO" id="GO:0051539">
    <property type="term" value="F:4 iron, 4 sulfur cluster binding"/>
    <property type="evidence" value="ECO:0007669"/>
    <property type="project" value="UniProtKB-UniRule"/>
</dbReference>
<dbReference type="GO" id="GO:0046429">
    <property type="term" value="F:4-hydroxy-3-methylbut-2-en-1-yl diphosphate synthase activity (ferredoxin)"/>
    <property type="evidence" value="ECO:0007669"/>
    <property type="project" value="UniProtKB-UniRule"/>
</dbReference>
<dbReference type="GO" id="GO:0141197">
    <property type="term" value="F:4-hydroxy-3-methylbut-2-enyl-diphosphate synthase activity (flavodoxin)"/>
    <property type="evidence" value="ECO:0007669"/>
    <property type="project" value="UniProtKB-EC"/>
</dbReference>
<dbReference type="GO" id="GO:0005506">
    <property type="term" value="F:iron ion binding"/>
    <property type="evidence" value="ECO:0007669"/>
    <property type="project" value="InterPro"/>
</dbReference>
<dbReference type="GO" id="GO:0019288">
    <property type="term" value="P:isopentenyl diphosphate biosynthetic process, methylerythritol 4-phosphate pathway"/>
    <property type="evidence" value="ECO:0007669"/>
    <property type="project" value="UniProtKB-UniRule"/>
</dbReference>
<dbReference type="GO" id="GO:0016114">
    <property type="term" value="P:terpenoid biosynthetic process"/>
    <property type="evidence" value="ECO:0007669"/>
    <property type="project" value="InterPro"/>
</dbReference>
<dbReference type="FunFam" id="3.20.20.20:FF:000001">
    <property type="entry name" value="4-hydroxy-3-methylbut-2-en-1-yl diphosphate synthase (flavodoxin)"/>
    <property type="match status" value="1"/>
</dbReference>
<dbReference type="Gene3D" id="3.20.20.20">
    <property type="entry name" value="Dihydropteroate synthase-like"/>
    <property type="match status" value="1"/>
</dbReference>
<dbReference type="Gene3D" id="3.30.413.10">
    <property type="entry name" value="Sulfite Reductase Hemoprotein, domain 1"/>
    <property type="match status" value="1"/>
</dbReference>
<dbReference type="HAMAP" id="MF_00159">
    <property type="entry name" value="IspG"/>
    <property type="match status" value="1"/>
</dbReference>
<dbReference type="InterPro" id="IPR011005">
    <property type="entry name" value="Dihydropteroate_synth-like_sf"/>
</dbReference>
<dbReference type="InterPro" id="IPR016425">
    <property type="entry name" value="IspG_bac"/>
</dbReference>
<dbReference type="InterPro" id="IPR004588">
    <property type="entry name" value="IspG_bac-typ"/>
</dbReference>
<dbReference type="InterPro" id="IPR045854">
    <property type="entry name" value="NO2/SO3_Rdtase_4Fe4S_sf"/>
</dbReference>
<dbReference type="NCBIfam" id="TIGR00612">
    <property type="entry name" value="ispG_gcpE"/>
    <property type="match status" value="1"/>
</dbReference>
<dbReference type="NCBIfam" id="NF001540">
    <property type="entry name" value="PRK00366.1"/>
    <property type="match status" value="1"/>
</dbReference>
<dbReference type="PANTHER" id="PTHR30454">
    <property type="entry name" value="4-HYDROXY-3-METHYLBUT-2-EN-1-YL DIPHOSPHATE SYNTHASE"/>
    <property type="match status" value="1"/>
</dbReference>
<dbReference type="PANTHER" id="PTHR30454:SF0">
    <property type="entry name" value="4-HYDROXY-3-METHYLBUT-2-EN-1-YL DIPHOSPHATE SYNTHASE (FERREDOXIN), CHLOROPLASTIC"/>
    <property type="match status" value="1"/>
</dbReference>
<dbReference type="Pfam" id="PF04551">
    <property type="entry name" value="GcpE"/>
    <property type="match status" value="1"/>
</dbReference>
<dbReference type="PIRSF" id="PIRSF004640">
    <property type="entry name" value="IspG"/>
    <property type="match status" value="1"/>
</dbReference>
<dbReference type="SUPFAM" id="SSF51717">
    <property type="entry name" value="Dihydropteroate synthetase-like"/>
    <property type="match status" value="1"/>
</dbReference>
<dbReference type="SUPFAM" id="SSF56014">
    <property type="entry name" value="Nitrite and sulphite reductase 4Fe-4S domain-like"/>
    <property type="match status" value="1"/>
</dbReference>
<proteinExistence type="inferred from homology"/>
<keyword id="KW-0004">4Fe-4S</keyword>
<keyword id="KW-0408">Iron</keyword>
<keyword id="KW-0411">Iron-sulfur</keyword>
<keyword id="KW-0414">Isoprene biosynthesis</keyword>
<keyword id="KW-0479">Metal-binding</keyword>
<keyword id="KW-0560">Oxidoreductase</keyword>
<keyword id="KW-1185">Reference proteome</keyword>
<gene>
    <name evidence="1" type="primary">ispG</name>
    <name type="ordered locus">PSHAb0138</name>
</gene>
<protein>
    <recommendedName>
        <fullName evidence="1">4-hydroxy-3-methylbut-2-en-1-yl diphosphate synthase (flavodoxin)</fullName>
        <ecNumber evidence="1">1.17.7.3</ecNumber>
    </recommendedName>
    <alternativeName>
        <fullName evidence="1">1-hydroxy-2-methyl-2-(E)-butenyl 4-diphosphate synthase</fullName>
    </alternativeName>
</protein>
<reference key="1">
    <citation type="journal article" date="2005" name="Genome Res.">
        <title>Coping with cold: the genome of the versatile marine Antarctica bacterium Pseudoalteromonas haloplanktis TAC125.</title>
        <authorList>
            <person name="Medigue C."/>
            <person name="Krin E."/>
            <person name="Pascal G."/>
            <person name="Barbe V."/>
            <person name="Bernsel A."/>
            <person name="Bertin P.N."/>
            <person name="Cheung F."/>
            <person name="Cruveiller S."/>
            <person name="D'Amico S."/>
            <person name="Duilio A."/>
            <person name="Fang G."/>
            <person name="Feller G."/>
            <person name="Ho C."/>
            <person name="Mangenot S."/>
            <person name="Marino G."/>
            <person name="Nilsson J."/>
            <person name="Parrilli E."/>
            <person name="Rocha E.P.C."/>
            <person name="Rouy Z."/>
            <person name="Sekowska A."/>
            <person name="Tutino M.L."/>
            <person name="Vallenet D."/>
            <person name="von Heijne G."/>
            <person name="Danchin A."/>
        </authorList>
    </citation>
    <scope>NUCLEOTIDE SEQUENCE [LARGE SCALE GENOMIC DNA]</scope>
    <source>
        <strain>TAC 125</strain>
    </source>
</reference>